<accession>B8EPC2</accession>
<dbReference type="EC" id="6.3.5.-" evidence="1"/>
<dbReference type="EMBL" id="CP001280">
    <property type="protein sequence ID" value="ACK49710.1"/>
    <property type="molecule type" value="Genomic_DNA"/>
</dbReference>
<dbReference type="RefSeq" id="WP_012589780.1">
    <property type="nucleotide sequence ID" value="NC_011666.1"/>
</dbReference>
<dbReference type="SMR" id="B8EPC2"/>
<dbReference type="STRING" id="395965.Msil_0739"/>
<dbReference type="KEGG" id="msl:Msil_0739"/>
<dbReference type="eggNOG" id="COG0721">
    <property type="taxonomic scope" value="Bacteria"/>
</dbReference>
<dbReference type="HOGENOM" id="CLU_105899_2_0_5"/>
<dbReference type="OrthoDB" id="9794326at2"/>
<dbReference type="Proteomes" id="UP000002257">
    <property type="component" value="Chromosome"/>
</dbReference>
<dbReference type="GO" id="GO:0050566">
    <property type="term" value="F:asparaginyl-tRNA synthase (glutamine-hydrolyzing) activity"/>
    <property type="evidence" value="ECO:0007669"/>
    <property type="project" value="RHEA"/>
</dbReference>
<dbReference type="GO" id="GO:0005524">
    <property type="term" value="F:ATP binding"/>
    <property type="evidence" value="ECO:0007669"/>
    <property type="project" value="UniProtKB-KW"/>
</dbReference>
<dbReference type="GO" id="GO:0050567">
    <property type="term" value="F:glutaminyl-tRNA synthase (glutamine-hydrolyzing) activity"/>
    <property type="evidence" value="ECO:0007669"/>
    <property type="project" value="UniProtKB-UniRule"/>
</dbReference>
<dbReference type="GO" id="GO:0070681">
    <property type="term" value="P:glutaminyl-tRNAGln biosynthesis via transamidation"/>
    <property type="evidence" value="ECO:0007669"/>
    <property type="project" value="TreeGrafter"/>
</dbReference>
<dbReference type="GO" id="GO:0006450">
    <property type="term" value="P:regulation of translational fidelity"/>
    <property type="evidence" value="ECO:0007669"/>
    <property type="project" value="InterPro"/>
</dbReference>
<dbReference type="GO" id="GO:0006412">
    <property type="term" value="P:translation"/>
    <property type="evidence" value="ECO:0007669"/>
    <property type="project" value="UniProtKB-UniRule"/>
</dbReference>
<dbReference type="Gene3D" id="1.10.20.60">
    <property type="entry name" value="Glu-tRNAGln amidotransferase C subunit, N-terminal domain"/>
    <property type="match status" value="1"/>
</dbReference>
<dbReference type="HAMAP" id="MF_00122">
    <property type="entry name" value="GatC"/>
    <property type="match status" value="1"/>
</dbReference>
<dbReference type="InterPro" id="IPR036113">
    <property type="entry name" value="Asp/Glu-ADT_sf_sub_c"/>
</dbReference>
<dbReference type="InterPro" id="IPR003837">
    <property type="entry name" value="GatC"/>
</dbReference>
<dbReference type="NCBIfam" id="TIGR00135">
    <property type="entry name" value="gatC"/>
    <property type="match status" value="1"/>
</dbReference>
<dbReference type="PANTHER" id="PTHR15004">
    <property type="entry name" value="GLUTAMYL-TRNA(GLN) AMIDOTRANSFERASE SUBUNIT C, MITOCHONDRIAL"/>
    <property type="match status" value="1"/>
</dbReference>
<dbReference type="PANTHER" id="PTHR15004:SF0">
    <property type="entry name" value="GLUTAMYL-TRNA(GLN) AMIDOTRANSFERASE SUBUNIT C, MITOCHONDRIAL"/>
    <property type="match status" value="1"/>
</dbReference>
<dbReference type="Pfam" id="PF02686">
    <property type="entry name" value="GatC"/>
    <property type="match status" value="1"/>
</dbReference>
<dbReference type="SUPFAM" id="SSF141000">
    <property type="entry name" value="Glu-tRNAGln amidotransferase C subunit"/>
    <property type="match status" value="1"/>
</dbReference>
<evidence type="ECO:0000255" key="1">
    <source>
        <dbReference type="HAMAP-Rule" id="MF_00122"/>
    </source>
</evidence>
<gene>
    <name evidence="1" type="primary">gatC</name>
    <name type="ordered locus">Msil_0739</name>
</gene>
<proteinExistence type="inferred from homology"/>
<reference key="1">
    <citation type="journal article" date="2010" name="J. Bacteriol.">
        <title>Complete genome sequence of the aerobic facultative methanotroph Methylocella silvestris BL2.</title>
        <authorList>
            <person name="Chen Y."/>
            <person name="Crombie A."/>
            <person name="Rahman M.T."/>
            <person name="Dedysh S.N."/>
            <person name="Liesack W."/>
            <person name="Stott M.B."/>
            <person name="Alam M."/>
            <person name="Theisen A.R."/>
            <person name="Murrell J.C."/>
            <person name="Dunfield P.F."/>
        </authorList>
    </citation>
    <scope>NUCLEOTIDE SEQUENCE [LARGE SCALE GENOMIC DNA]</scope>
    <source>
        <strain>DSM 15510 / CIP 108128 / LMG 27833 / NCIMB 13906 / BL2</strain>
    </source>
</reference>
<comment type="function">
    <text evidence="1">Allows the formation of correctly charged Asn-tRNA(Asn) or Gln-tRNA(Gln) through the transamidation of misacylated Asp-tRNA(Asn) or Glu-tRNA(Gln) in organisms which lack either or both of asparaginyl-tRNA or glutaminyl-tRNA synthetases. The reaction takes place in the presence of glutamine and ATP through an activated phospho-Asp-tRNA(Asn) or phospho-Glu-tRNA(Gln).</text>
</comment>
<comment type="catalytic activity">
    <reaction evidence="1">
        <text>L-glutamyl-tRNA(Gln) + L-glutamine + ATP + H2O = L-glutaminyl-tRNA(Gln) + L-glutamate + ADP + phosphate + H(+)</text>
        <dbReference type="Rhea" id="RHEA:17521"/>
        <dbReference type="Rhea" id="RHEA-COMP:9681"/>
        <dbReference type="Rhea" id="RHEA-COMP:9684"/>
        <dbReference type="ChEBI" id="CHEBI:15377"/>
        <dbReference type="ChEBI" id="CHEBI:15378"/>
        <dbReference type="ChEBI" id="CHEBI:29985"/>
        <dbReference type="ChEBI" id="CHEBI:30616"/>
        <dbReference type="ChEBI" id="CHEBI:43474"/>
        <dbReference type="ChEBI" id="CHEBI:58359"/>
        <dbReference type="ChEBI" id="CHEBI:78520"/>
        <dbReference type="ChEBI" id="CHEBI:78521"/>
        <dbReference type="ChEBI" id="CHEBI:456216"/>
    </reaction>
</comment>
<comment type="catalytic activity">
    <reaction evidence="1">
        <text>L-aspartyl-tRNA(Asn) + L-glutamine + ATP + H2O = L-asparaginyl-tRNA(Asn) + L-glutamate + ADP + phosphate + 2 H(+)</text>
        <dbReference type="Rhea" id="RHEA:14513"/>
        <dbReference type="Rhea" id="RHEA-COMP:9674"/>
        <dbReference type="Rhea" id="RHEA-COMP:9677"/>
        <dbReference type="ChEBI" id="CHEBI:15377"/>
        <dbReference type="ChEBI" id="CHEBI:15378"/>
        <dbReference type="ChEBI" id="CHEBI:29985"/>
        <dbReference type="ChEBI" id="CHEBI:30616"/>
        <dbReference type="ChEBI" id="CHEBI:43474"/>
        <dbReference type="ChEBI" id="CHEBI:58359"/>
        <dbReference type="ChEBI" id="CHEBI:78515"/>
        <dbReference type="ChEBI" id="CHEBI:78516"/>
        <dbReference type="ChEBI" id="CHEBI:456216"/>
    </reaction>
</comment>
<comment type="subunit">
    <text evidence="1">Heterotrimer of A, B and C subunits.</text>
</comment>
<comment type="similarity">
    <text evidence="1">Belongs to the GatC family.</text>
</comment>
<feature type="chain" id="PRO_1000122574" description="Aspartyl/glutamyl-tRNA(Asn/Gln) amidotransferase subunit C">
    <location>
        <begin position="1"/>
        <end position="95"/>
    </location>
</feature>
<name>GATC_METSB</name>
<organism>
    <name type="scientific">Methylocella silvestris (strain DSM 15510 / CIP 108128 / LMG 27833 / NCIMB 13906 / BL2)</name>
    <dbReference type="NCBI Taxonomy" id="395965"/>
    <lineage>
        <taxon>Bacteria</taxon>
        <taxon>Pseudomonadati</taxon>
        <taxon>Pseudomonadota</taxon>
        <taxon>Alphaproteobacteria</taxon>
        <taxon>Hyphomicrobiales</taxon>
        <taxon>Beijerinckiaceae</taxon>
        <taxon>Methylocella</taxon>
    </lineage>
</organism>
<sequence>MSVDQATVRRIAHLARIKVSDEDVPHLQDELNAILRFVEELAAVDVEGVEAMTSVMPMPMKKRQDIVTEGEIPDVILANAPEREDHFFKVPKVVE</sequence>
<protein>
    <recommendedName>
        <fullName evidence="1">Aspartyl/glutamyl-tRNA(Asn/Gln) amidotransferase subunit C</fullName>
        <shortName evidence="1">Asp/Glu-ADT subunit C</shortName>
        <ecNumber evidence="1">6.3.5.-</ecNumber>
    </recommendedName>
</protein>
<keyword id="KW-0067">ATP-binding</keyword>
<keyword id="KW-0436">Ligase</keyword>
<keyword id="KW-0547">Nucleotide-binding</keyword>
<keyword id="KW-0648">Protein biosynthesis</keyword>
<keyword id="KW-1185">Reference proteome</keyword>